<keyword id="KW-0067">ATP-binding</keyword>
<keyword id="KW-0997">Cell inner membrane</keyword>
<keyword id="KW-1003">Cell membrane</keyword>
<keyword id="KW-0472">Membrane</keyword>
<keyword id="KW-0547">Nucleotide-binding</keyword>
<keyword id="KW-1185">Reference proteome</keyword>
<keyword id="KW-0677">Repeat</keyword>
<keyword id="KW-0762">Sugar transport</keyword>
<keyword id="KW-1278">Translocase</keyword>
<keyword id="KW-0813">Transport</keyword>
<dbReference type="EC" id="7.5.2.11" evidence="1"/>
<dbReference type="EMBL" id="U45323">
    <property type="protein sequence ID" value="AAC44749.1"/>
    <property type="molecule type" value="Genomic_DNA"/>
</dbReference>
<dbReference type="EMBL" id="U48416">
    <property type="protein sequence ID" value="AAC44585.1"/>
    <property type="molecule type" value="Genomic_DNA"/>
</dbReference>
<dbReference type="EMBL" id="AE000520">
    <property type="protein sequence ID" value="AAC65648.1"/>
    <property type="molecule type" value="Genomic_DNA"/>
</dbReference>
<dbReference type="PIR" id="JC5170">
    <property type="entry name" value="JC5170"/>
</dbReference>
<dbReference type="RefSeq" id="WP_010882130.1">
    <property type="nucleotide sequence ID" value="NC_021490.2"/>
</dbReference>
<dbReference type="SMR" id="Q56342"/>
<dbReference type="IntAct" id="Q56342">
    <property type="interactions" value="1"/>
</dbReference>
<dbReference type="STRING" id="243276.TP_0685"/>
<dbReference type="EnsemblBacteria" id="AAC65648">
    <property type="protein sequence ID" value="AAC65648"/>
    <property type="gene ID" value="TP_0685"/>
</dbReference>
<dbReference type="KEGG" id="tpa:TP_0685"/>
<dbReference type="KEGG" id="tpw:TPANIC_0685"/>
<dbReference type="eggNOG" id="COG1129">
    <property type="taxonomic scope" value="Bacteria"/>
</dbReference>
<dbReference type="HOGENOM" id="CLU_000604_92_3_12"/>
<dbReference type="OrthoDB" id="304830at2"/>
<dbReference type="Proteomes" id="UP000000811">
    <property type="component" value="Chromosome"/>
</dbReference>
<dbReference type="GO" id="GO:0005886">
    <property type="term" value="C:plasma membrane"/>
    <property type="evidence" value="ECO:0007669"/>
    <property type="project" value="UniProtKB-SubCell"/>
</dbReference>
<dbReference type="GO" id="GO:0005524">
    <property type="term" value="F:ATP binding"/>
    <property type="evidence" value="ECO:0007669"/>
    <property type="project" value="UniProtKB-KW"/>
</dbReference>
<dbReference type="GO" id="GO:0016887">
    <property type="term" value="F:ATP hydrolysis activity"/>
    <property type="evidence" value="ECO:0007669"/>
    <property type="project" value="InterPro"/>
</dbReference>
<dbReference type="CDD" id="cd03216">
    <property type="entry name" value="ABC_Carb_Monos_I"/>
    <property type="match status" value="1"/>
</dbReference>
<dbReference type="CDD" id="cd03215">
    <property type="entry name" value="ABC_Carb_Monos_II"/>
    <property type="match status" value="1"/>
</dbReference>
<dbReference type="FunFam" id="3.40.50.300:FF:000127">
    <property type="entry name" value="Ribose import ATP-binding protein RbsA"/>
    <property type="match status" value="1"/>
</dbReference>
<dbReference type="Gene3D" id="3.40.50.300">
    <property type="entry name" value="P-loop containing nucleotide triphosphate hydrolases"/>
    <property type="match status" value="2"/>
</dbReference>
<dbReference type="InterPro" id="IPR003593">
    <property type="entry name" value="AAA+_ATPase"/>
</dbReference>
<dbReference type="InterPro" id="IPR050107">
    <property type="entry name" value="ABC_carbohydrate_import_ATPase"/>
</dbReference>
<dbReference type="InterPro" id="IPR003439">
    <property type="entry name" value="ABC_transporter-like_ATP-bd"/>
</dbReference>
<dbReference type="InterPro" id="IPR017871">
    <property type="entry name" value="ABC_transporter-like_CS"/>
</dbReference>
<dbReference type="InterPro" id="IPR027417">
    <property type="entry name" value="P-loop_NTPase"/>
</dbReference>
<dbReference type="PANTHER" id="PTHR43790">
    <property type="entry name" value="CARBOHYDRATE TRANSPORT ATP-BINDING PROTEIN MG119-RELATED"/>
    <property type="match status" value="1"/>
</dbReference>
<dbReference type="PANTHER" id="PTHR43790:SF7">
    <property type="entry name" value="GALACTOSE_METHYL GALACTOSIDE IMPORT ATP-BINDING PROTEIN MGLA"/>
    <property type="match status" value="1"/>
</dbReference>
<dbReference type="Pfam" id="PF00005">
    <property type="entry name" value="ABC_tran"/>
    <property type="match status" value="2"/>
</dbReference>
<dbReference type="SMART" id="SM00382">
    <property type="entry name" value="AAA"/>
    <property type="match status" value="2"/>
</dbReference>
<dbReference type="SUPFAM" id="SSF52540">
    <property type="entry name" value="P-loop containing nucleoside triphosphate hydrolases"/>
    <property type="match status" value="2"/>
</dbReference>
<dbReference type="PROSITE" id="PS00211">
    <property type="entry name" value="ABC_TRANSPORTER_1"/>
    <property type="match status" value="1"/>
</dbReference>
<dbReference type="PROSITE" id="PS50893">
    <property type="entry name" value="ABC_TRANSPORTER_2"/>
    <property type="match status" value="2"/>
</dbReference>
<dbReference type="PROSITE" id="PS51260">
    <property type="entry name" value="MGLA"/>
    <property type="match status" value="1"/>
</dbReference>
<gene>
    <name evidence="1" type="primary">mglA</name>
    <name type="ordered locus">TP_0685</name>
</gene>
<accession>Q56342</accession>
<accession>Q56341</accession>
<evidence type="ECO:0000255" key="1">
    <source>
        <dbReference type="HAMAP-Rule" id="MF_01717"/>
    </source>
</evidence>
<evidence type="ECO:0000305" key="2"/>
<organism>
    <name type="scientific">Treponema pallidum (strain Nichols)</name>
    <dbReference type="NCBI Taxonomy" id="243276"/>
    <lineage>
        <taxon>Bacteria</taxon>
        <taxon>Pseudomonadati</taxon>
        <taxon>Spirochaetota</taxon>
        <taxon>Spirochaetia</taxon>
        <taxon>Spirochaetales</taxon>
        <taxon>Treponemataceae</taxon>
        <taxon>Treponema</taxon>
    </lineage>
</organism>
<feature type="chain" id="PRO_0000092518" description="Galactose/methyl galactoside import ATP-binding protein MglA">
    <location>
        <begin position="1"/>
        <end position="496"/>
    </location>
</feature>
<feature type="domain" description="ABC transporter 1" evidence="1">
    <location>
        <begin position="5"/>
        <end position="240"/>
    </location>
</feature>
<feature type="domain" description="ABC transporter 2" evidence="1">
    <location>
        <begin position="243"/>
        <end position="496"/>
    </location>
</feature>
<feature type="binding site" evidence="1">
    <location>
        <begin position="37"/>
        <end position="44"/>
    </location>
    <ligand>
        <name>ATP</name>
        <dbReference type="ChEBI" id="CHEBI:30616"/>
    </ligand>
</feature>
<feature type="sequence conflict" description="In Ref. 1; AAC44749." evidence="2" ref="1">
    <original>F</original>
    <variation>L</variation>
    <location>
        <position position="118"/>
    </location>
</feature>
<sequence length="496" mass="55191">MCDVLTIRDLSKSFARNRVLNGVNFRMGKGAVVGLMGENGAGKSTLMKCLFGMYAKDTGQILVDGSPVDFQSPKEALENGVAMVHQELNQCLDRTVMDNLFLGRYPARFGIVDEKRMFDDSLTLFASLKMDVNPRAVMRSMSVSQRQMVEIAKAMSYNAKIIVLDEPTSSLTEREIVRLFAIIRDLSKKGVAFIYISHKMDEIFQICSEVIVLRDGVLTLSQSIGEVEMSDLITAMVGRTLDKRFPDADNTVGDDYLEIRGLSTRYAPQLRDISLSVKRGEIFGLYGLVGAGRSELLEAIFGLRTIADGEISLAGKKIRLKSSRDAMKLNFAFVPEERKLNGMFAKGSIEYNTTIANLPAYKRYGLLSKKKLQEAAEREIKAMRVKCVSPSELISALSGGNQQKVIIGKWLERDPDVLLLDEPTRGIDVGAKYEIYQLIIRMAREGKTIIVVSSEMPEILGITNRIAVMSNYRLAGIVDTKSTDQEALLRLSARYL</sequence>
<proteinExistence type="inferred from homology"/>
<reference key="1">
    <citation type="journal article" date="1996" name="DNA Seq.">
        <title>Identification and sequences of the Treponema pallidum mglA and mglC genes.</title>
        <authorList>
            <person name="Stamm L.V."/>
            <person name="Young N.R."/>
            <person name="Frye J.G."/>
            <person name="Hardham J.M."/>
        </authorList>
    </citation>
    <scope>NUCLEOTIDE SEQUENCE [GENOMIC DNA]</scope>
    <source>
        <strain>Nichols</strain>
    </source>
</reference>
<reference key="2">
    <citation type="journal article" date="1996" name="Gene">
        <title>A mgl-like operon in Treponema pallidum, the syphilis spirochete.</title>
        <authorList>
            <person name="Porcella S.F."/>
            <person name="Popova T.G."/>
            <person name="Hagman K.E."/>
            <person name="Penn C.W."/>
            <person name="Radolf J.D."/>
            <person name="Norgard M.V."/>
        </authorList>
    </citation>
    <scope>NUCLEOTIDE SEQUENCE [GENOMIC DNA]</scope>
</reference>
<reference key="3">
    <citation type="journal article" date="1998" name="Science">
        <title>Complete genome sequence of Treponema pallidum, the syphilis spirochete.</title>
        <authorList>
            <person name="Fraser C.M."/>
            <person name="Norris S.J."/>
            <person name="Weinstock G.M."/>
            <person name="White O."/>
            <person name="Sutton G.G."/>
            <person name="Dodson R.J."/>
            <person name="Gwinn M.L."/>
            <person name="Hickey E.K."/>
            <person name="Clayton R.A."/>
            <person name="Ketchum K.A."/>
            <person name="Sodergren E."/>
            <person name="Hardham J.M."/>
            <person name="McLeod M.P."/>
            <person name="Salzberg S.L."/>
            <person name="Peterson J.D."/>
            <person name="Khalak H.G."/>
            <person name="Richardson D.L."/>
            <person name="Howell J.K."/>
            <person name="Chidambaram M."/>
            <person name="Utterback T.R."/>
            <person name="McDonald L.A."/>
            <person name="Artiach P."/>
            <person name="Bowman C."/>
            <person name="Cotton M.D."/>
            <person name="Fujii C."/>
            <person name="Garland S.A."/>
            <person name="Hatch B."/>
            <person name="Horst K."/>
            <person name="Roberts K.M."/>
            <person name="Sandusky M."/>
            <person name="Weidman J.F."/>
            <person name="Smith H.O."/>
            <person name="Venter J.C."/>
        </authorList>
    </citation>
    <scope>NUCLEOTIDE SEQUENCE [LARGE SCALE GENOMIC DNA]</scope>
    <source>
        <strain>Nichols</strain>
    </source>
</reference>
<comment type="function">
    <text evidence="1">Part of the ABC transporter complex MglABC involved in galactose/methyl galactoside import. Responsible for energy coupling to the transport system.</text>
</comment>
<comment type="catalytic activity">
    <reaction evidence="1">
        <text>D-galactose(out) + ATP + H2O = D-galactose(in) + ADP + phosphate + H(+)</text>
        <dbReference type="Rhea" id="RHEA:60156"/>
        <dbReference type="ChEBI" id="CHEBI:4139"/>
        <dbReference type="ChEBI" id="CHEBI:15377"/>
        <dbReference type="ChEBI" id="CHEBI:15378"/>
        <dbReference type="ChEBI" id="CHEBI:30616"/>
        <dbReference type="ChEBI" id="CHEBI:43474"/>
        <dbReference type="ChEBI" id="CHEBI:456216"/>
        <dbReference type="EC" id="7.5.2.11"/>
    </reaction>
    <physiologicalReaction direction="left-to-right" evidence="1">
        <dbReference type="Rhea" id="RHEA:60157"/>
    </physiologicalReaction>
</comment>
<comment type="catalytic activity">
    <reaction evidence="1">
        <text>methyl beta-D-galactoside(out) + ATP + H2O = methyl beta-D-galactoside(in) + ADP + phosphate + H(+)</text>
        <dbReference type="Rhea" id="RHEA:72531"/>
        <dbReference type="ChEBI" id="CHEBI:15377"/>
        <dbReference type="ChEBI" id="CHEBI:15378"/>
        <dbReference type="ChEBI" id="CHEBI:17540"/>
        <dbReference type="ChEBI" id="CHEBI:30616"/>
        <dbReference type="ChEBI" id="CHEBI:43474"/>
        <dbReference type="ChEBI" id="CHEBI:456216"/>
    </reaction>
    <physiologicalReaction direction="left-to-right" evidence="1">
        <dbReference type="Rhea" id="RHEA:72532"/>
    </physiologicalReaction>
</comment>
<comment type="subunit">
    <text evidence="1">The complex is composed of one ATP-binding protein (MglA), two transmembrane proteins (MglC) and a solute-binding protein (MglB).</text>
</comment>
<comment type="subcellular location">
    <subcellularLocation>
        <location evidence="1">Cell inner membrane</location>
        <topology evidence="1">Peripheral membrane protein</topology>
    </subcellularLocation>
</comment>
<comment type="similarity">
    <text evidence="1">Belongs to the ABC transporter superfamily. Galactose/methyl galactoside importer (TC 3.A.1.2.3) family.</text>
</comment>
<name>MGLA_TREPA</name>
<protein>
    <recommendedName>
        <fullName evidence="1">Galactose/methyl galactoside import ATP-binding protein MglA</fullName>
        <ecNumber evidence="1">7.5.2.11</ecNumber>
    </recommendedName>
</protein>